<gene>
    <name type="primary">MCF2L</name>
    <name type="synonym">KIAA0362</name>
    <name evidence="11" type="synonym">OST</name>
</gene>
<proteinExistence type="evidence at protein level"/>
<accession>O15068</accession>
<accession>A2A2X1</accession>
<accession>A2A2X2</accession>
<accession>A2A3G6</accession>
<accession>A2A3G8</accession>
<accession>B4DHD6</accession>
<accession>B4DIL6</accession>
<accession>E9PDN8</accession>
<accession>Q5JU56</accession>
<accession>Q5VXT1</accession>
<accession>Q6ZWD4</accession>
<accession>Q765G8</accession>
<accession>Q765G9</accession>
<accession>Q8N679</accession>
<evidence type="ECO:0000250" key="1">
    <source>
        <dbReference type="UniProtKB" id="Q63406"/>
    </source>
</evidence>
<evidence type="ECO:0000250" key="2">
    <source>
        <dbReference type="UniProtKB" id="Q64096"/>
    </source>
</evidence>
<evidence type="ECO:0000255" key="3"/>
<evidence type="ECO:0000255" key="4">
    <source>
        <dbReference type="PROSITE-ProRule" id="PRU00056"/>
    </source>
</evidence>
<evidence type="ECO:0000255" key="5">
    <source>
        <dbReference type="PROSITE-ProRule" id="PRU00062"/>
    </source>
</evidence>
<evidence type="ECO:0000255" key="6">
    <source>
        <dbReference type="PROSITE-ProRule" id="PRU00145"/>
    </source>
</evidence>
<evidence type="ECO:0000255" key="7">
    <source>
        <dbReference type="PROSITE-ProRule" id="PRU00192"/>
    </source>
</evidence>
<evidence type="ECO:0000256" key="8">
    <source>
        <dbReference type="SAM" id="MobiDB-lite"/>
    </source>
</evidence>
<evidence type="ECO:0000269" key="9">
    <source>
    </source>
</evidence>
<evidence type="ECO:0000303" key="10">
    <source>
    </source>
</evidence>
<evidence type="ECO:0000303" key="11">
    <source>
    </source>
</evidence>
<evidence type="ECO:0000303" key="12">
    <source>
    </source>
</evidence>
<evidence type="ECO:0000303" key="13">
    <source>
    </source>
</evidence>
<evidence type="ECO:0000305" key="14"/>
<reference key="1">
    <citation type="journal article" date="2004" name="Cell. Signal.">
        <title>Role of the Sec14-like domain of Dbl family exchange factors in the regulation of Rho family GTPases in different subcellular sites.</title>
        <authorList>
            <person name="Ueda S."/>
            <person name="Kataoka T."/>
            <person name="Satoh T."/>
        </authorList>
    </citation>
    <scope>NUCLEOTIDE SEQUENCE [MRNA] (ISOFORMS 3 AND 5)</scope>
    <scope>FUNCTION</scope>
    <scope>SUBCELLULAR LOCATION</scope>
    <scope>DOMAIN</scope>
    <scope>INTERACTION WITH CDC42 AND INOSITOL PHOSPHOLIPIDS</scope>
</reference>
<reference key="2">
    <citation type="journal article" date="1997" name="DNA Res.">
        <title>Prediction of the coding sequences of unidentified human genes. VII. The complete sequences of 100 new cDNA clones from brain which can code for large proteins in vitro.</title>
        <authorList>
            <person name="Nagase T."/>
            <person name="Ishikawa K."/>
            <person name="Nakajima D."/>
            <person name="Ohira M."/>
            <person name="Seki N."/>
            <person name="Miyajima N."/>
            <person name="Tanaka A."/>
            <person name="Kotani H."/>
            <person name="Nomura N."/>
            <person name="Ohara O."/>
        </authorList>
    </citation>
    <scope>NUCLEOTIDE SEQUENCE [LARGE SCALE MRNA] (ISOFORM 2)</scope>
    <source>
        <tissue>Brain</tissue>
    </source>
</reference>
<reference key="3">
    <citation type="journal article" date="2004" name="Nat. Genet.">
        <title>Complete sequencing and characterization of 21,243 full-length human cDNAs.</title>
        <authorList>
            <person name="Ota T."/>
            <person name="Suzuki Y."/>
            <person name="Nishikawa T."/>
            <person name="Otsuki T."/>
            <person name="Sugiyama T."/>
            <person name="Irie R."/>
            <person name="Wakamatsu A."/>
            <person name="Hayashi K."/>
            <person name="Sato H."/>
            <person name="Nagai K."/>
            <person name="Kimura K."/>
            <person name="Makita H."/>
            <person name="Sekine M."/>
            <person name="Obayashi M."/>
            <person name="Nishi T."/>
            <person name="Shibahara T."/>
            <person name="Tanaka T."/>
            <person name="Ishii S."/>
            <person name="Yamamoto J."/>
            <person name="Saito K."/>
            <person name="Kawai Y."/>
            <person name="Isono Y."/>
            <person name="Nakamura Y."/>
            <person name="Nagahari K."/>
            <person name="Murakami K."/>
            <person name="Yasuda T."/>
            <person name="Iwayanagi T."/>
            <person name="Wagatsuma M."/>
            <person name="Shiratori A."/>
            <person name="Sudo H."/>
            <person name="Hosoiri T."/>
            <person name="Kaku Y."/>
            <person name="Kodaira H."/>
            <person name="Kondo H."/>
            <person name="Sugawara M."/>
            <person name="Takahashi M."/>
            <person name="Kanda K."/>
            <person name="Yokoi T."/>
            <person name="Furuya T."/>
            <person name="Kikkawa E."/>
            <person name="Omura Y."/>
            <person name="Abe K."/>
            <person name="Kamihara K."/>
            <person name="Katsuta N."/>
            <person name="Sato K."/>
            <person name="Tanikawa M."/>
            <person name="Yamazaki M."/>
            <person name="Ninomiya K."/>
            <person name="Ishibashi T."/>
            <person name="Yamashita H."/>
            <person name="Murakawa K."/>
            <person name="Fujimori K."/>
            <person name="Tanai H."/>
            <person name="Kimata M."/>
            <person name="Watanabe M."/>
            <person name="Hiraoka S."/>
            <person name="Chiba Y."/>
            <person name="Ishida S."/>
            <person name="Ono Y."/>
            <person name="Takiguchi S."/>
            <person name="Watanabe S."/>
            <person name="Yosida M."/>
            <person name="Hotuta T."/>
            <person name="Kusano J."/>
            <person name="Kanehori K."/>
            <person name="Takahashi-Fujii A."/>
            <person name="Hara H."/>
            <person name="Tanase T.-O."/>
            <person name="Nomura Y."/>
            <person name="Togiya S."/>
            <person name="Komai F."/>
            <person name="Hara R."/>
            <person name="Takeuchi K."/>
            <person name="Arita M."/>
            <person name="Imose N."/>
            <person name="Musashino K."/>
            <person name="Yuuki H."/>
            <person name="Oshima A."/>
            <person name="Sasaki N."/>
            <person name="Aotsuka S."/>
            <person name="Yoshikawa Y."/>
            <person name="Matsunawa H."/>
            <person name="Ichihara T."/>
            <person name="Shiohata N."/>
            <person name="Sano S."/>
            <person name="Moriya S."/>
            <person name="Momiyama H."/>
            <person name="Satoh N."/>
            <person name="Takami S."/>
            <person name="Terashima Y."/>
            <person name="Suzuki O."/>
            <person name="Nakagawa S."/>
            <person name="Senoh A."/>
            <person name="Mizoguchi H."/>
            <person name="Goto Y."/>
            <person name="Shimizu F."/>
            <person name="Wakebe H."/>
            <person name="Hishigaki H."/>
            <person name="Watanabe T."/>
            <person name="Sugiyama A."/>
            <person name="Takemoto M."/>
            <person name="Kawakami B."/>
            <person name="Yamazaki M."/>
            <person name="Watanabe K."/>
            <person name="Kumagai A."/>
            <person name="Itakura S."/>
            <person name="Fukuzumi Y."/>
            <person name="Fujimori Y."/>
            <person name="Komiyama M."/>
            <person name="Tashiro H."/>
            <person name="Tanigami A."/>
            <person name="Fujiwara T."/>
            <person name="Ono T."/>
            <person name="Yamada K."/>
            <person name="Fujii Y."/>
            <person name="Ozaki K."/>
            <person name="Hirao M."/>
            <person name="Ohmori Y."/>
            <person name="Kawabata A."/>
            <person name="Hikiji T."/>
            <person name="Kobatake N."/>
            <person name="Inagaki H."/>
            <person name="Ikema Y."/>
            <person name="Okamoto S."/>
            <person name="Okitani R."/>
            <person name="Kawakami T."/>
            <person name="Noguchi S."/>
            <person name="Itoh T."/>
            <person name="Shigeta K."/>
            <person name="Senba T."/>
            <person name="Matsumura K."/>
            <person name="Nakajima Y."/>
            <person name="Mizuno T."/>
            <person name="Morinaga M."/>
            <person name="Sasaki M."/>
            <person name="Togashi T."/>
            <person name="Oyama M."/>
            <person name="Hata H."/>
            <person name="Watanabe M."/>
            <person name="Komatsu T."/>
            <person name="Mizushima-Sugano J."/>
            <person name="Satoh T."/>
            <person name="Shirai Y."/>
            <person name="Takahashi Y."/>
            <person name="Nakagawa K."/>
            <person name="Okumura K."/>
            <person name="Nagase T."/>
            <person name="Nomura N."/>
            <person name="Kikuchi H."/>
            <person name="Masuho Y."/>
            <person name="Yamashita R."/>
            <person name="Nakai K."/>
            <person name="Yada T."/>
            <person name="Nakamura Y."/>
            <person name="Ohara O."/>
            <person name="Isogai T."/>
            <person name="Sugano S."/>
        </authorList>
    </citation>
    <scope>NUCLEOTIDE SEQUENCE [LARGE SCALE MRNA] (ISOFORMS 7 AND 9)</scope>
    <source>
        <tissue>Brain</tissue>
        <tissue>Hippocampus</tissue>
    </source>
</reference>
<reference key="4">
    <citation type="journal article" date="2004" name="Nature">
        <title>The DNA sequence and analysis of human chromosome 13.</title>
        <authorList>
            <person name="Dunham A."/>
            <person name="Matthews L.H."/>
            <person name="Burton J."/>
            <person name="Ashurst J.L."/>
            <person name="Howe K.L."/>
            <person name="Ashcroft K.J."/>
            <person name="Beare D.M."/>
            <person name="Burford D.C."/>
            <person name="Hunt S.E."/>
            <person name="Griffiths-Jones S."/>
            <person name="Jones M.C."/>
            <person name="Keenan S.J."/>
            <person name="Oliver K."/>
            <person name="Scott C.E."/>
            <person name="Ainscough R."/>
            <person name="Almeida J.P."/>
            <person name="Ambrose K.D."/>
            <person name="Andrews D.T."/>
            <person name="Ashwell R.I.S."/>
            <person name="Babbage A.K."/>
            <person name="Bagguley C.L."/>
            <person name="Bailey J."/>
            <person name="Bannerjee R."/>
            <person name="Barlow K.F."/>
            <person name="Bates K."/>
            <person name="Beasley H."/>
            <person name="Bird C.P."/>
            <person name="Bray-Allen S."/>
            <person name="Brown A.J."/>
            <person name="Brown J.Y."/>
            <person name="Burrill W."/>
            <person name="Carder C."/>
            <person name="Carter N.P."/>
            <person name="Chapman J.C."/>
            <person name="Clamp M.E."/>
            <person name="Clark S.Y."/>
            <person name="Clarke G."/>
            <person name="Clee C.M."/>
            <person name="Clegg S.C."/>
            <person name="Cobley V."/>
            <person name="Collins J.E."/>
            <person name="Corby N."/>
            <person name="Coville G.J."/>
            <person name="Deloukas P."/>
            <person name="Dhami P."/>
            <person name="Dunham I."/>
            <person name="Dunn M."/>
            <person name="Earthrowl M.E."/>
            <person name="Ellington A.G."/>
            <person name="Faulkner L."/>
            <person name="Frankish A.G."/>
            <person name="Frankland J."/>
            <person name="French L."/>
            <person name="Garner P."/>
            <person name="Garnett J."/>
            <person name="Gilbert J.G.R."/>
            <person name="Gilson C.J."/>
            <person name="Ghori J."/>
            <person name="Grafham D.V."/>
            <person name="Gribble S.M."/>
            <person name="Griffiths C."/>
            <person name="Hall R.E."/>
            <person name="Hammond S."/>
            <person name="Harley J.L."/>
            <person name="Hart E.A."/>
            <person name="Heath P.D."/>
            <person name="Howden P.J."/>
            <person name="Huckle E.J."/>
            <person name="Hunt P.J."/>
            <person name="Hunt A.R."/>
            <person name="Johnson C."/>
            <person name="Johnson D."/>
            <person name="Kay M."/>
            <person name="Kimberley A.M."/>
            <person name="King A."/>
            <person name="Laird G.K."/>
            <person name="Langford C.J."/>
            <person name="Lawlor S."/>
            <person name="Leongamornlert D.A."/>
            <person name="Lloyd D.M."/>
            <person name="Lloyd C."/>
            <person name="Loveland J.E."/>
            <person name="Lovell J."/>
            <person name="Martin S."/>
            <person name="Mashreghi-Mohammadi M."/>
            <person name="McLaren S.J."/>
            <person name="McMurray A."/>
            <person name="Milne S."/>
            <person name="Moore M.J.F."/>
            <person name="Nickerson T."/>
            <person name="Palmer S.A."/>
            <person name="Pearce A.V."/>
            <person name="Peck A.I."/>
            <person name="Pelan S."/>
            <person name="Phillimore B."/>
            <person name="Porter K.M."/>
            <person name="Rice C.M."/>
            <person name="Searle S."/>
            <person name="Sehra H.K."/>
            <person name="Shownkeen R."/>
            <person name="Skuce C.D."/>
            <person name="Smith M."/>
            <person name="Steward C.A."/>
            <person name="Sycamore N."/>
            <person name="Tester J."/>
            <person name="Thomas D.W."/>
            <person name="Tracey A."/>
            <person name="Tromans A."/>
            <person name="Tubby B."/>
            <person name="Wall M."/>
            <person name="Wallis J.M."/>
            <person name="West A.P."/>
            <person name="Whitehead S.L."/>
            <person name="Willey D.L."/>
            <person name="Wilming L."/>
            <person name="Wray P.W."/>
            <person name="Wright M.W."/>
            <person name="Young L."/>
            <person name="Coulson A."/>
            <person name="Durbin R.M."/>
            <person name="Hubbard T."/>
            <person name="Sulston J.E."/>
            <person name="Beck S."/>
            <person name="Bentley D.R."/>
            <person name="Rogers J."/>
            <person name="Ross M.T."/>
        </authorList>
    </citation>
    <scope>NUCLEOTIDE SEQUENCE [LARGE SCALE GENOMIC DNA]</scope>
</reference>
<reference key="5">
    <citation type="journal article" date="2004" name="Genome Res.">
        <title>The status, quality, and expansion of the NIH full-length cDNA project: the Mammalian Gene Collection (MGC).</title>
        <authorList>
            <consortium name="The MGC Project Team"/>
        </authorList>
    </citation>
    <scope>NUCLEOTIDE SEQUENCE [LARGE SCALE MRNA] (ISOFORM 4)</scope>
    <source>
        <tissue>Muscle</tissue>
    </source>
</reference>
<sequence>MFDCWRFILCKRPGSNSYSSPQRPNEAKKEETDHQIDVSDVIRLVQDTPEATAMATDEIMHQDIVPLCAADIQDQLKKRFAYLSGGRGQDGSPVITFPDYPAFSEIPDKEFQNVMTYLTSIPSLQDAGIGFILVIDRRRDKWTSVKASVLRIAASFPANLQLVLVLRPTGFFQRTLSDIAFKFNRDDFKMKVPVIMLSSVPDLHGYIDKSQLTEDLGGTLDYCHSRWLCQRTAIESFALMVKQTAQMLQSFGTELAETELPNDVQSTSSVLCAHTEKKDKAKEDLRLALKEGHSVLESLRELQAEGSEPSVNQDQLDNQATVQRLLAQLNETEAAFDEFWAKHQQKLEQCLQLRHFEQGFREVKAILDAASQKIATFTDIGNSLAHVEHLLRDLASFEEKSGVAVERARALSLDGEQLIGNKHYAVDSIRPKCQELRHLCDQFSAEIARRRGLLSKSLELHRRLETSMKWCDEGIYLLASQPVDKCQSQDGAEAALQEIEKFLETGAENKIQELNAIYKEYESILNQDLMEHVRKVFQKQASMEEVFHRRQASLKKLAARQTRPVQPVAPRPEALAKSPCPSPGIRRGSENSSSEGGALRRGPYRRAKSEMSESRQGRGSAGEEEESLAILRRHVMSELLDTERAYVEELLCVLEGYAAEMDNPLMAHLLSTGLHNKKDVLFGNMEEIYHFHNRIFLRELENYTDCPELVGRCFLERMEDFQIYEKYCQNKPRSESLWRQCSDCPFFQECQRKLDHKLSLDSYLLKPVQRITKYQLLLKEMLKYSRNCEGAEDLQEALSSILGILKAVNDSMHLIAITGYDGNLGDLGKLLMQGSFSVWTDHKRGHTKVKELARFKPMQRHLFLHEKAVLFCKKREENGEGYEKAPSYSYKQSLNMAAVGITENVKGDAKKFEIWYNAREEVYIVQAPTPEIKAAWVNEIRKVLTSQLQACREASQHRALEQSQSLPLPAPTSTSPSRGNSRNIKKLEERKTDPLSLEGYVSSAPLTKPPEKGKGWSKTSHSLEAPEDDGGWSSAEEQINSSDAEEDGGLGPKKLVPGKYTVVADHEKGGPDALRVRSGDVVELVQEGDEGLWYVRDPTTGKEGWVPASSLSVRLGPSGSAQCLSSSGKAHVPRAHP</sequence>
<keyword id="KW-0025">Alternative splicing</keyword>
<keyword id="KW-1003">Cell membrane</keyword>
<keyword id="KW-0175">Coiled coil</keyword>
<keyword id="KW-0963">Cytoplasm</keyword>
<keyword id="KW-0344">Guanine-nucleotide releasing factor</keyword>
<keyword id="KW-0446">Lipid-binding</keyword>
<keyword id="KW-0472">Membrane</keyword>
<keyword id="KW-0597">Phosphoprotein</keyword>
<keyword id="KW-1267">Proteomics identification</keyword>
<keyword id="KW-0656">Proto-oncogene</keyword>
<keyword id="KW-1185">Reference proteome</keyword>
<keyword id="KW-0728">SH3 domain</keyword>
<organism>
    <name type="scientific">Homo sapiens</name>
    <name type="common">Human</name>
    <dbReference type="NCBI Taxonomy" id="9606"/>
    <lineage>
        <taxon>Eukaryota</taxon>
        <taxon>Metazoa</taxon>
        <taxon>Chordata</taxon>
        <taxon>Craniata</taxon>
        <taxon>Vertebrata</taxon>
        <taxon>Euteleostomi</taxon>
        <taxon>Mammalia</taxon>
        <taxon>Eutheria</taxon>
        <taxon>Euarchontoglires</taxon>
        <taxon>Primates</taxon>
        <taxon>Haplorrhini</taxon>
        <taxon>Catarrhini</taxon>
        <taxon>Hominidae</taxon>
        <taxon>Homo</taxon>
    </lineage>
</organism>
<dbReference type="EMBL" id="AB116074">
    <property type="protein sequence ID" value="BAD08351.1"/>
    <property type="molecule type" value="mRNA"/>
</dbReference>
<dbReference type="EMBL" id="AB116075">
    <property type="protein sequence ID" value="BAD08352.1"/>
    <property type="molecule type" value="mRNA"/>
</dbReference>
<dbReference type="EMBL" id="AB002360">
    <property type="protein sequence ID" value="BAA20817.1"/>
    <property type="status" value="ALT_INIT"/>
    <property type="molecule type" value="mRNA"/>
</dbReference>
<dbReference type="EMBL" id="AK295047">
    <property type="protein sequence ID" value="BAG58097.1"/>
    <property type="molecule type" value="mRNA"/>
</dbReference>
<dbReference type="EMBL" id="AK295670">
    <property type="protein sequence ID" value="BAG58528.1"/>
    <property type="molecule type" value="mRNA"/>
</dbReference>
<dbReference type="EMBL" id="AL356740">
    <property type="status" value="NOT_ANNOTATED_CDS"/>
    <property type="molecule type" value="Genomic_DNA"/>
</dbReference>
<dbReference type="EMBL" id="AL596093">
    <property type="status" value="NOT_ANNOTATED_CDS"/>
    <property type="molecule type" value="Genomic_DNA"/>
</dbReference>
<dbReference type="EMBL" id="AL162454">
    <property type="status" value="NOT_ANNOTATED_CDS"/>
    <property type="molecule type" value="Genomic_DNA"/>
</dbReference>
<dbReference type="EMBL" id="AL137002">
    <property type="status" value="NOT_ANNOTATED_CDS"/>
    <property type="molecule type" value="Genomic_DNA"/>
</dbReference>
<dbReference type="EMBL" id="BC011853">
    <property type="protein sequence ID" value="AAH11853.1"/>
    <property type="molecule type" value="mRNA"/>
</dbReference>
<dbReference type="EMBL" id="BC020208">
    <property type="protein sequence ID" value="AAH20208.1"/>
    <property type="molecule type" value="mRNA"/>
</dbReference>
<dbReference type="CCDS" id="CCDS45070.2">
    <molecule id="O15068-9"/>
</dbReference>
<dbReference type="CCDS" id="CCDS81782.1">
    <molecule id="O15068-4"/>
</dbReference>
<dbReference type="CCDS" id="CCDS9527.3">
    <molecule id="O15068-10"/>
</dbReference>
<dbReference type="RefSeq" id="NP_001106203.2">
    <molecule id="O15068-9"/>
    <property type="nucleotide sequence ID" value="NM_001112732.3"/>
</dbReference>
<dbReference type="RefSeq" id="NP_001307744.1">
    <property type="nucleotide sequence ID" value="NM_001320815.1"/>
</dbReference>
<dbReference type="RefSeq" id="NP_001307745.1">
    <property type="nucleotide sequence ID" value="NM_001320816.1"/>
</dbReference>
<dbReference type="RefSeq" id="NP_001307746.1">
    <molecule id="O15068-4"/>
    <property type="nucleotide sequence ID" value="NM_001320817.2"/>
</dbReference>
<dbReference type="RefSeq" id="NP_079255.4">
    <molecule id="O15068-10"/>
    <property type="nucleotide sequence ID" value="NM_024979.4"/>
</dbReference>
<dbReference type="SMR" id="O15068"/>
<dbReference type="BioGRID" id="116865">
    <property type="interactions" value="21"/>
</dbReference>
<dbReference type="FunCoup" id="O15068">
    <property type="interactions" value="451"/>
</dbReference>
<dbReference type="IntAct" id="O15068">
    <property type="interactions" value="11"/>
</dbReference>
<dbReference type="MINT" id="O15068"/>
<dbReference type="STRING" id="9606.ENSP00000440374"/>
<dbReference type="ChEMBL" id="CHEMBL4524032"/>
<dbReference type="SwissLipids" id="SLP:000001547"/>
<dbReference type="iPTMnet" id="O15068"/>
<dbReference type="PhosphoSitePlus" id="O15068"/>
<dbReference type="SwissPalm" id="O15068"/>
<dbReference type="BioMuta" id="MCF2L"/>
<dbReference type="jPOST" id="O15068"/>
<dbReference type="MassIVE" id="O15068"/>
<dbReference type="PaxDb" id="9606-ENSP00000440374"/>
<dbReference type="PeptideAtlas" id="O15068"/>
<dbReference type="ProteomicsDB" id="19715"/>
<dbReference type="ProteomicsDB" id="48418">
    <molecule id="O15068-1"/>
</dbReference>
<dbReference type="ProteomicsDB" id="48419">
    <molecule id="O15068-2"/>
</dbReference>
<dbReference type="ProteomicsDB" id="48420">
    <molecule id="O15068-3"/>
</dbReference>
<dbReference type="ProteomicsDB" id="48421">
    <molecule id="O15068-4"/>
</dbReference>
<dbReference type="ProteomicsDB" id="48422">
    <molecule id="O15068-5"/>
</dbReference>
<dbReference type="ProteomicsDB" id="48423">
    <molecule id="O15068-6"/>
</dbReference>
<dbReference type="ProteomicsDB" id="48424">
    <molecule id="O15068-8"/>
</dbReference>
<dbReference type="ProteomicsDB" id="48425">
    <molecule id="O15068-9"/>
</dbReference>
<dbReference type="Pumba" id="O15068"/>
<dbReference type="Antibodypedia" id="1984">
    <property type="antibodies" value="155 antibodies from 32 providers"/>
</dbReference>
<dbReference type="DNASU" id="23263"/>
<dbReference type="Ensembl" id="ENST00000375597.8">
    <molecule id="O15068-4"/>
    <property type="protein sequence ID" value="ENSP00000364747.4"/>
    <property type="gene ID" value="ENSG00000126217.22"/>
</dbReference>
<dbReference type="Ensembl" id="ENST00000375604.6">
    <molecule id="O15068-10"/>
    <property type="protein sequence ID" value="ENSP00000364754.3"/>
    <property type="gene ID" value="ENSG00000126217.22"/>
</dbReference>
<dbReference type="Ensembl" id="ENST00000375608.7">
    <molecule id="O15068-1"/>
    <property type="protein sequence ID" value="ENSP00000364758.3"/>
    <property type="gene ID" value="ENSG00000126217.22"/>
</dbReference>
<dbReference type="Ensembl" id="ENST00000397030.5">
    <molecule id="O15068-2"/>
    <property type="protein sequence ID" value="ENSP00000380225.1"/>
    <property type="gene ID" value="ENSG00000126217.22"/>
</dbReference>
<dbReference type="Ensembl" id="ENST00000421756.5">
    <molecule id="O15068-3"/>
    <property type="protein sequence ID" value="ENSP00000397285.1"/>
    <property type="gene ID" value="ENSG00000126217.22"/>
</dbReference>
<dbReference type="Ensembl" id="ENST00000535094.7">
    <molecule id="O15068-9"/>
    <property type="protein sequence ID" value="ENSP00000440374.2"/>
    <property type="gene ID" value="ENSG00000126217.22"/>
</dbReference>
<dbReference type="GeneID" id="23263"/>
<dbReference type="KEGG" id="hsa:23263"/>
<dbReference type="MANE-Select" id="ENST00000535094.7">
    <molecule id="O15068-9"/>
    <property type="protein sequence ID" value="ENSP00000440374.2"/>
    <property type="RefSeq nucleotide sequence ID" value="NM_001112732.3"/>
    <property type="RefSeq protein sequence ID" value="NP_001106203.2"/>
</dbReference>
<dbReference type="UCSC" id="uc001vss.5">
    <molecule id="O15068-1"/>
    <property type="organism name" value="human"/>
</dbReference>
<dbReference type="AGR" id="HGNC:14576"/>
<dbReference type="CTD" id="23263"/>
<dbReference type="DisGeNET" id="23263"/>
<dbReference type="GeneCards" id="MCF2L"/>
<dbReference type="HGNC" id="HGNC:14576">
    <property type="gene designation" value="MCF2L"/>
</dbReference>
<dbReference type="HPA" id="ENSG00000126217">
    <property type="expression patterns" value="Tissue enhanced (brain)"/>
</dbReference>
<dbReference type="MIM" id="609499">
    <property type="type" value="gene"/>
</dbReference>
<dbReference type="neXtProt" id="NX_O15068"/>
<dbReference type="OpenTargets" id="ENSG00000126217"/>
<dbReference type="PharmGKB" id="PA30685"/>
<dbReference type="VEuPathDB" id="HostDB:ENSG00000126217"/>
<dbReference type="eggNOG" id="KOG4240">
    <property type="taxonomic scope" value="Eukaryota"/>
</dbReference>
<dbReference type="GeneTree" id="ENSGT00940000157874"/>
<dbReference type="HOGENOM" id="CLU_007130_1_0_1"/>
<dbReference type="InParanoid" id="O15068"/>
<dbReference type="OMA" id="MFHRRQV"/>
<dbReference type="OrthoDB" id="10004999at2759"/>
<dbReference type="PAN-GO" id="O15068">
    <property type="GO annotations" value="4 GO annotations based on evolutionary models"/>
</dbReference>
<dbReference type="PhylomeDB" id="O15068"/>
<dbReference type="TreeFam" id="TF318080"/>
<dbReference type="PathwayCommons" id="O15068"/>
<dbReference type="Reactome" id="R-HSA-193648">
    <property type="pathway name" value="NRAGE signals death through JNK"/>
</dbReference>
<dbReference type="Reactome" id="R-HSA-416482">
    <property type="pathway name" value="G alpha (12/13) signalling events"/>
</dbReference>
<dbReference type="Reactome" id="R-HSA-8980692">
    <property type="pathway name" value="RHOA GTPase cycle"/>
</dbReference>
<dbReference type="Reactome" id="R-HSA-9013026">
    <property type="pathway name" value="RHOB GTPase cycle"/>
</dbReference>
<dbReference type="Reactome" id="R-HSA-9013106">
    <property type="pathway name" value="RHOC GTPase cycle"/>
</dbReference>
<dbReference type="Reactome" id="R-HSA-9013148">
    <property type="pathway name" value="CDC42 GTPase cycle"/>
</dbReference>
<dbReference type="Reactome" id="R-HSA-9013149">
    <property type="pathway name" value="RAC1 GTPase cycle"/>
</dbReference>
<dbReference type="Reactome" id="R-HSA-9013408">
    <property type="pathway name" value="RHOG GTPase cycle"/>
</dbReference>
<dbReference type="SignaLink" id="O15068"/>
<dbReference type="SIGNOR" id="O15068"/>
<dbReference type="BioGRID-ORCS" id="23263">
    <property type="hits" value="23 hits in 1150 CRISPR screens"/>
</dbReference>
<dbReference type="ChiTaRS" id="MCF2L">
    <property type="organism name" value="human"/>
</dbReference>
<dbReference type="GeneWiki" id="MCF2L"/>
<dbReference type="GenomeRNAi" id="23263"/>
<dbReference type="Pharos" id="O15068">
    <property type="development level" value="Tbio"/>
</dbReference>
<dbReference type="PRO" id="PR:O15068"/>
<dbReference type="Proteomes" id="UP000005640">
    <property type="component" value="Chromosome 13"/>
</dbReference>
<dbReference type="RNAct" id="O15068">
    <property type="molecule type" value="protein"/>
</dbReference>
<dbReference type="Bgee" id="ENSG00000126217">
    <property type="expression patterns" value="Expressed in right hemisphere of cerebellum and 172 other cell types or tissues"/>
</dbReference>
<dbReference type="ExpressionAtlas" id="O15068">
    <property type="expression patterns" value="baseline and differential"/>
</dbReference>
<dbReference type="GO" id="GO:0005737">
    <property type="term" value="C:cytoplasm"/>
    <property type="evidence" value="ECO:0000314"/>
    <property type="project" value="UniProtKB"/>
</dbReference>
<dbReference type="GO" id="GO:0005829">
    <property type="term" value="C:cytosol"/>
    <property type="evidence" value="ECO:0000304"/>
    <property type="project" value="Reactome"/>
</dbReference>
<dbReference type="GO" id="GO:0012505">
    <property type="term" value="C:endomembrane system"/>
    <property type="evidence" value="ECO:0000314"/>
    <property type="project" value="UniProtKB"/>
</dbReference>
<dbReference type="GO" id="GO:0005615">
    <property type="term" value="C:extracellular space"/>
    <property type="evidence" value="ECO:0007005"/>
    <property type="project" value="UniProtKB"/>
</dbReference>
<dbReference type="GO" id="GO:0031234">
    <property type="term" value="C:extrinsic component of cytoplasmic side of plasma membrane"/>
    <property type="evidence" value="ECO:0000314"/>
    <property type="project" value="UniProtKB"/>
</dbReference>
<dbReference type="GO" id="GO:0005886">
    <property type="term" value="C:plasma membrane"/>
    <property type="evidence" value="ECO:0007669"/>
    <property type="project" value="UniProtKB-SubCell"/>
</dbReference>
<dbReference type="GO" id="GO:0005085">
    <property type="term" value="F:guanyl-nucleotide exchange factor activity"/>
    <property type="evidence" value="ECO:0000314"/>
    <property type="project" value="UniProtKB"/>
</dbReference>
<dbReference type="GO" id="GO:0035091">
    <property type="term" value="F:phosphatidylinositol binding"/>
    <property type="evidence" value="ECO:0000314"/>
    <property type="project" value="UniProtKB"/>
</dbReference>
<dbReference type="GO" id="GO:0035556">
    <property type="term" value="P:intracellular signal transduction"/>
    <property type="evidence" value="ECO:0007669"/>
    <property type="project" value="InterPro"/>
</dbReference>
<dbReference type="GO" id="GO:0035025">
    <property type="term" value="P:positive regulation of Rho protein signal transduction"/>
    <property type="evidence" value="ECO:0000314"/>
    <property type="project" value="UniProtKB"/>
</dbReference>
<dbReference type="GO" id="GO:0051056">
    <property type="term" value="P:regulation of small GTPase mediated signal transduction"/>
    <property type="evidence" value="ECO:0000304"/>
    <property type="project" value="Reactome"/>
</dbReference>
<dbReference type="CDD" id="cd01227">
    <property type="entry name" value="PH_Dbs"/>
    <property type="match status" value="1"/>
</dbReference>
<dbReference type="CDD" id="cd00160">
    <property type="entry name" value="RhoGEF"/>
    <property type="match status" value="1"/>
</dbReference>
<dbReference type="CDD" id="cd00170">
    <property type="entry name" value="SEC14"/>
    <property type="match status" value="1"/>
</dbReference>
<dbReference type="CDD" id="cd11857">
    <property type="entry name" value="SH3_DBS"/>
    <property type="match status" value="1"/>
</dbReference>
<dbReference type="CDD" id="cd00176">
    <property type="entry name" value="SPEC"/>
    <property type="match status" value="1"/>
</dbReference>
<dbReference type="FunFam" id="1.20.900.10:FF:000001">
    <property type="entry name" value="Guanine nucleotide exchange factor DBS"/>
    <property type="match status" value="1"/>
</dbReference>
<dbReference type="FunFam" id="2.30.29.30:FF:000078">
    <property type="entry name" value="Guanine nucleotide exchange factor DBS"/>
    <property type="match status" value="1"/>
</dbReference>
<dbReference type="FunFam" id="2.30.30.40:FF:000198">
    <property type="entry name" value="Guanine nucleotide exchange factor DBS"/>
    <property type="match status" value="1"/>
</dbReference>
<dbReference type="FunFam" id="1.20.58.60:FF:000136">
    <property type="entry name" value="MCF.2 cell line derived transforming sequence like"/>
    <property type="match status" value="1"/>
</dbReference>
<dbReference type="Gene3D" id="1.20.58.60">
    <property type="match status" value="1"/>
</dbReference>
<dbReference type="Gene3D" id="1.20.900.10">
    <property type="entry name" value="Dbl homology (DH) domain"/>
    <property type="match status" value="1"/>
</dbReference>
<dbReference type="Gene3D" id="2.30.29.30">
    <property type="entry name" value="Pleckstrin-homology domain (PH domain)/Phosphotyrosine-binding domain (PTB)"/>
    <property type="match status" value="1"/>
</dbReference>
<dbReference type="Gene3D" id="2.30.30.40">
    <property type="entry name" value="SH3 Domains"/>
    <property type="match status" value="1"/>
</dbReference>
<dbReference type="InterPro" id="IPR001251">
    <property type="entry name" value="CRAL-TRIO_dom"/>
</dbReference>
<dbReference type="InterPro" id="IPR036865">
    <property type="entry name" value="CRAL-TRIO_dom_sf"/>
</dbReference>
<dbReference type="InterPro" id="IPR035899">
    <property type="entry name" value="DBL_dom_sf"/>
</dbReference>
<dbReference type="InterPro" id="IPR035534">
    <property type="entry name" value="DBS_PH"/>
</dbReference>
<dbReference type="InterPro" id="IPR035532">
    <property type="entry name" value="DBS_SH3"/>
</dbReference>
<dbReference type="InterPro" id="IPR000219">
    <property type="entry name" value="DH_dom"/>
</dbReference>
<dbReference type="InterPro" id="IPR001331">
    <property type="entry name" value="GDS_CDC24_CS"/>
</dbReference>
<dbReference type="InterPro" id="IPR011993">
    <property type="entry name" value="PH-like_dom_sf"/>
</dbReference>
<dbReference type="InterPro" id="IPR001849">
    <property type="entry name" value="PH_domain"/>
</dbReference>
<dbReference type="InterPro" id="IPR051336">
    <property type="entry name" value="RhoGEF_Guanine_NuclExch_SF"/>
</dbReference>
<dbReference type="InterPro" id="IPR036028">
    <property type="entry name" value="SH3-like_dom_sf"/>
</dbReference>
<dbReference type="InterPro" id="IPR001452">
    <property type="entry name" value="SH3_domain"/>
</dbReference>
<dbReference type="InterPro" id="IPR055251">
    <property type="entry name" value="SOS1_NGEF_PH"/>
</dbReference>
<dbReference type="InterPro" id="IPR018159">
    <property type="entry name" value="Spectrin/alpha-actinin"/>
</dbReference>
<dbReference type="InterPro" id="IPR056466">
    <property type="entry name" value="Spectrin_DBS"/>
</dbReference>
<dbReference type="InterPro" id="IPR002017">
    <property type="entry name" value="Spectrin_repeat"/>
</dbReference>
<dbReference type="PANTHER" id="PTHR22826:SF115">
    <property type="entry name" value="GUANINE NUCLEOTIDE EXCHANGE FACTOR DBS"/>
    <property type="match status" value="1"/>
</dbReference>
<dbReference type="PANTHER" id="PTHR22826">
    <property type="entry name" value="RHO GUANINE EXCHANGE FACTOR-RELATED"/>
    <property type="match status" value="1"/>
</dbReference>
<dbReference type="Pfam" id="PF13716">
    <property type="entry name" value="CRAL_TRIO_2"/>
    <property type="match status" value="1"/>
</dbReference>
<dbReference type="Pfam" id="PF00621">
    <property type="entry name" value="RhoGEF"/>
    <property type="match status" value="1"/>
</dbReference>
<dbReference type="Pfam" id="PF07653">
    <property type="entry name" value="SH3_2"/>
    <property type="match status" value="1"/>
</dbReference>
<dbReference type="Pfam" id="PF22697">
    <property type="entry name" value="SOS1_NGEF_PH"/>
    <property type="match status" value="1"/>
</dbReference>
<dbReference type="Pfam" id="PF00435">
    <property type="entry name" value="Spectrin"/>
    <property type="match status" value="1"/>
</dbReference>
<dbReference type="Pfam" id="PF23289">
    <property type="entry name" value="Spectrin_5"/>
    <property type="match status" value="1"/>
</dbReference>
<dbReference type="SMART" id="SM00233">
    <property type="entry name" value="PH"/>
    <property type="match status" value="1"/>
</dbReference>
<dbReference type="SMART" id="SM00325">
    <property type="entry name" value="RhoGEF"/>
    <property type="match status" value="1"/>
</dbReference>
<dbReference type="SMART" id="SM00516">
    <property type="entry name" value="SEC14"/>
    <property type="match status" value="1"/>
</dbReference>
<dbReference type="SMART" id="SM00326">
    <property type="entry name" value="SH3"/>
    <property type="match status" value="1"/>
</dbReference>
<dbReference type="SMART" id="SM00150">
    <property type="entry name" value="SPEC"/>
    <property type="match status" value="1"/>
</dbReference>
<dbReference type="SUPFAM" id="SSF52087">
    <property type="entry name" value="CRAL/TRIO domain"/>
    <property type="match status" value="1"/>
</dbReference>
<dbReference type="SUPFAM" id="SSF48065">
    <property type="entry name" value="DBL homology domain (DH-domain)"/>
    <property type="match status" value="1"/>
</dbReference>
<dbReference type="SUPFAM" id="SSF50729">
    <property type="entry name" value="PH domain-like"/>
    <property type="match status" value="1"/>
</dbReference>
<dbReference type="SUPFAM" id="SSF50044">
    <property type="entry name" value="SH3-domain"/>
    <property type="match status" value="1"/>
</dbReference>
<dbReference type="SUPFAM" id="SSF46966">
    <property type="entry name" value="Spectrin repeat"/>
    <property type="match status" value="1"/>
</dbReference>
<dbReference type="PROSITE" id="PS50191">
    <property type="entry name" value="CRAL_TRIO"/>
    <property type="match status" value="1"/>
</dbReference>
<dbReference type="PROSITE" id="PS00741">
    <property type="entry name" value="DH_1"/>
    <property type="match status" value="1"/>
</dbReference>
<dbReference type="PROSITE" id="PS50010">
    <property type="entry name" value="DH_2"/>
    <property type="match status" value="1"/>
</dbReference>
<dbReference type="PROSITE" id="PS50003">
    <property type="entry name" value="PH_DOMAIN"/>
    <property type="match status" value="1"/>
</dbReference>
<dbReference type="PROSITE" id="PS50002">
    <property type="entry name" value="SH3"/>
    <property type="match status" value="1"/>
</dbReference>
<name>MCF2L_HUMAN</name>
<comment type="function">
    <text evidence="1 9">Guanine nucleotide exchange factor that catalyzes guanine nucleotide exchange on RHOA and CDC42, and thereby contributes to the regulation of RHOA and CDC42 signaling pathways (By similarity). Seems to lack activity with RAC1. Becomes activated and highly tumorigenic by truncation of the N-terminus (By similarity). Isoform 5 activates CDC42 (PubMed:15157669).</text>
</comment>
<comment type="function">
    <molecule>Isoform 3</molecule>
    <text evidence="9">Does not catalyze guanine nucleotide exchange on CDC42 (PubMed:15157669).</text>
</comment>
<comment type="subunit">
    <text evidence="1 2 9">Interacts with GTP-bound RAC1 (By similarity). Interacts with CDC42 (PubMed:15157669). Interacts with RHOA. Interacts with CCPG1, which results in specific inhibition of its exchange activity toward RHOA, but does not affect its activity on CDC42 (By similarity).</text>
</comment>
<comment type="interaction">
    <interactant intactId="EBI-21375623">
        <id>O15068-4</id>
    </interactant>
    <interactant intactId="EBI-720609">
        <id>O76024</id>
        <label>WFS1</label>
    </interactant>
    <organismsDiffer>false</organismsDiffer>
    <experiments>3</experiments>
</comment>
<comment type="subcellular location">
    <molecule>Isoform 5</molecule>
    <subcellularLocation>
        <location evidence="9">Cytoplasm</location>
    </subcellularLocation>
    <subcellularLocation>
        <location evidence="9">Cell membrane</location>
        <topology evidence="9">Peripheral membrane protein</topology>
        <orientation evidence="9">Cytoplasmic side</orientation>
    </subcellularLocation>
</comment>
<comment type="subcellular location">
    <molecule>Isoform 3</molecule>
    <subcellularLocation>
        <location evidence="9">Cytoplasm</location>
    </subcellularLocation>
    <subcellularLocation>
        <location evidence="9">Endomembrane system</location>
    </subcellularLocation>
    <text evidence="9">Interaction with membranes enriched in phosphoinositides is mediated by the CRAL-TRIO domain.</text>
</comment>
<comment type="subcellular location">
    <subcellularLocation>
        <location evidence="2">Cytoplasm</location>
    </subcellularLocation>
    <subcellularLocation>
        <location evidence="2">Cell membrane</location>
        <topology evidence="2">Peripheral membrane protein</topology>
        <orientation evidence="2">Cytoplasmic side</orientation>
    </subcellularLocation>
</comment>
<comment type="alternative products">
    <event type="alternative splicing"/>
    <isoform>
        <id>O15068-1</id>
        <name>1</name>
        <sequence type="displayed"/>
    </isoform>
    <isoform>
        <id>O15068-2</id>
        <name>2</name>
        <sequence type="described" ref="VSP_026120 VSP_026128"/>
    </isoform>
    <isoform>
        <id>O15068-3</id>
        <name>3</name>
        <name evidence="11">Ost-II</name>
        <sequence type="described" ref="VSP_026121 VSP_026128"/>
    </isoform>
    <isoform>
        <id>O15068-4</id>
        <name>4</name>
        <sequence type="described" ref="VSP_026122 VSP_026126 VSP_026127"/>
    </isoform>
    <isoform>
        <id>O15068-5</id>
        <name>5</name>
        <name evidence="11">Ost-I</name>
        <sequence type="described" ref="VSP_026119 VSP_026128"/>
    </isoform>
    <isoform>
        <id>O15068-6</id>
        <name>6</name>
        <sequence type="described" ref="VSP_026123"/>
    </isoform>
    <isoform>
        <id>O15068-9</id>
        <name>7</name>
        <sequence type="described" ref="VSP_026123 VSP_039037"/>
    </isoform>
    <isoform>
        <id>O15068-8</id>
        <name>8</name>
        <sequence type="described" ref="VSP_026124"/>
    </isoform>
    <isoform>
        <id>O15068-10</id>
        <name>9</name>
        <sequence type="described" ref="VSP_026122 VSP_039037"/>
    </isoform>
    <text>A number of isoforms are produced. According to EST sequences. Experimental confirmation may be lacking for some isoforms.</text>
</comment>
<comment type="domain">
    <text evidence="9">The CRAL-TRIO domain mediates interaction with various inositol phospholipids, such as phosphatidylinositol 3-phosphate (PI3P), phosphatidylinositol 4-phosphate (PI4P) and phosphatidylinositol 5-phosphate (PI5P).</text>
</comment>
<comment type="domain">
    <text evidence="2">The DH domain is involved in interaction with CCPG1.</text>
</comment>
<comment type="similarity">
    <text evidence="14">Belongs to the MCF2 family.</text>
</comment>
<comment type="sequence caution" evidence="14">
    <conflict type="erroneous initiation">
        <sequence resource="EMBL-CDS" id="BAA20817"/>
    </conflict>
    <text>Extended N-terminus.</text>
</comment>
<protein>
    <recommendedName>
        <fullName>Guanine nucleotide exchange factor DBS</fullName>
    </recommendedName>
    <alternativeName>
        <fullName>DBL's big sister</fullName>
    </alternativeName>
    <alternativeName>
        <fullName>MCF2-transforming sequence-like protein</fullName>
    </alternativeName>
</protein>
<feature type="chain" id="PRO_0000080935" description="Guanine nucleotide exchange factor DBS">
    <location>
        <begin position="1"/>
        <end position="1137"/>
    </location>
</feature>
<feature type="domain" description="CRAL-TRIO" evidence="4">
    <location>
        <begin position="52"/>
        <end position="224"/>
    </location>
</feature>
<feature type="repeat" description="Spectrin">
    <location>
        <begin position="351"/>
        <end position="456"/>
    </location>
</feature>
<feature type="domain" description="DH" evidence="5">
    <location>
        <begin position="631"/>
        <end position="811"/>
    </location>
</feature>
<feature type="domain" description="PH" evidence="6">
    <location>
        <begin position="829"/>
        <end position="945"/>
    </location>
</feature>
<feature type="domain" description="SH3" evidence="7">
    <location>
        <begin position="1055"/>
        <end position="1116"/>
    </location>
</feature>
<feature type="region of interest" description="Disordered" evidence="8">
    <location>
        <begin position="557"/>
        <end position="625"/>
    </location>
</feature>
<feature type="region of interest" description="Disordered" evidence="8">
    <location>
        <begin position="955"/>
        <end position="1058"/>
    </location>
</feature>
<feature type="region of interest" description="Disordered" evidence="8">
    <location>
        <begin position="1116"/>
        <end position="1137"/>
    </location>
</feature>
<feature type="coiled-coil region" evidence="3">
    <location>
        <begin position="503"/>
        <end position="529"/>
    </location>
</feature>
<feature type="compositionally biased region" description="Low complexity" evidence="8">
    <location>
        <begin position="584"/>
        <end position="597"/>
    </location>
</feature>
<feature type="compositionally biased region" description="Basic and acidic residues" evidence="8">
    <location>
        <begin position="607"/>
        <end position="616"/>
    </location>
</feature>
<feature type="compositionally biased region" description="Low complexity" evidence="8">
    <location>
        <begin position="962"/>
        <end position="977"/>
    </location>
</feature>
<feature type="compositionally biased region" description="Polar residues" evidence="8">
    <location>
        <begin position="1119"/>
        <end position="1128"/>
    </location>
</feature>
<feature type="modified residue" description="Phosphoserine" evidence="1">
    <location>
        <position position="457"/>
    </location>
</feature>
<feature type="modified residue" description="Phosphoserine" evidence="1">
    <location>
        <position position="480"/>
    </location>
</feature>
<feature type="modified residue" description="Phosphoserine" evidence="2">
    <location>
        <position position="620"/>
    </location>
</feature>
<feature type="modified residue" description="Phosphoserine" evidence="2">
    <location>
        <position position="1033"/>
    </location>
</feature>
<feature type="modified residue" description="Phosphoserine" evidence="2">
    <location>
        <position position="1034"/>
    </location>
</feature>
<feature type="modified residue" description="Phosphoserine" evidence="2">
    <location>
        <position position="1041"/>
    </location>
</feature>
<feature type="modified residue" description="Phosphoserine" evidence="2">
    <location>
        <position position="1042"/>
    </location>
</feature>
<feature type="splice variant" id="VSP_026119" description="In isoform 5." evidence="11">
    <location>
        <begin position="1"/>
        <end position="189"/>
    </location>
</feature>
<feature type="splice variant" id="VSP_026120" description="In isoform 2." evidence="13">
    <original>MFDCWRFILCKRPGSNSYSSPQRPNEAKKEETDHQIDVSDVIRLVQDTPEATAMAT</original>
    <variation>MPLRGGAGPSPASHGPTHGPSDPRTCLPGRGAGGMRPHGRGALGCCGLCSFYTCHGAAG</variation>
    <location>
        <begin position="1"/>
        <end position="56"/>
    </location>
</feature>
<feature type="splice variant" id="VSP_026121" description="In isoform 3." evidence="11">
    <original>MFDCWRFILCKRPGSNSYSSPQRPNEAKKEETDHQIDVSDVIRLVQDTPEATAMAT</original>
    <variation>MAEKGASRGTLRRLWSLPRRRRGTAGRSRP</variation>
    <location>
        <begin position="1"/>
        <end position="56"/>
    </location>
</feature>
<feature type="splice variant" id="VSP_026122" description="In isoform 4 and isoform 9." evidence="10 12">
    <original>MFDCWRFILCKRPGSNSYSSPQRPNEAKKEETDHQIDVSDVIRLVQDTPEATAMAT</original>
    <variation>MTVRRLSLLCRDLWALWLLLKAGA</variation>
    <location>
        <begin position="1"/>
        <end position="56"/>
    </location>
</feature>
<feature type="splice variant" id="VSP_026123" description="In isoform 6 and isoform 7." evidence="10">
    <original>MFDCWRFILCKRPGSNSYSSPQRPNEAKKEETDHQIDVSDVIRLVQDTPEATAMAT</original>
    <variation>MRFWLRTEEMALEEMVQRLNAVSKHT</variation>
    <location>
        <begin position="1"/>
        <end position="56"/>
    </location>
</feature>
<feature type="splice variant" id="VSP_026124" description="In isoform 8." evidence="14">
    <original>MFDCWRFILCKRPGSNSYSSPQRPNEAKKEETDHQIDVSDVIRLVQDTPEATAMAT</original>
    <variation>MGDGKAVRISVAEMKSYYLYSEWCSWLLSVAE</variation>
    <location>
        <begin position="1"/>
        <end position="56"/>
    </location>
</feature>
<feature type="splice variant" id="VSP_026126" description="In isoform 4." evidence="12">
    <original>GW</original>
    <variation>EP</variation>
    <location>
        <begin position="1015"/>
        <end position="1016"/>
    </location>
</feature>
<feature type="splice variant" id="VSP_026127" description="In isoform 4." evidence="12">
    <location>
        <begin position="1017"/>
        <end position="1137"/>
    </location>
</feature>
<feature type="splice variant" id="VSP_026128" description="In isoform 2, isoform 3 and isoform 5." evidence="11 13">
    <location>
        <begin position="1094"/>
        <end position="1137"/>
    </location>
</feature>
<feature type="splice variant" id="VSP_039037" description="In isoform 7 and isoform 9." evidence="10">
    <original>GKAHVPRAHP</original>
    <variation>ESSPGSAVLSNSSSCSEGGQAPFSDLQG</variation>
    <location>
        <begin position="1128"/>
        <end position="1137"/>
    </location>
</feature>
<feature type="sequence conflict" description="In Ref. 3; BAG58097." evidence="14" ref="3">
    <original>C</original>
    <variation>S</variation>
    <location>
        <position position="580"/>
    </location>
</feature>
<feature type="sequence conflict" description="In Ref. 3; BAG58097." evidence="14" ref="3">
    <original>E</original>
    <variation>G</variation>
    <location>
        <position position="660"/>
    </location>
</feature>
<feature type="sequence conflict" description="In Ref. 3; BAG58528." evidence="14" ref="3">
    <original>F</original>
    <variation>L</variation>
    <location>
        <position position="721"/>
    </location>
</feature>
<feature type="sequence conflict" description="In Ref. 3; BAG58528." evidence="14" ref="3">
    <original>P</original>
    <variation>L</variation>
    <location>
        <position position="1052"/>
    </location>
</feature>
<feature type="sequence conflict" description="In Ref. 3; BAG58097." evidence="14" ref="3">
    <original>C</original>
    <variation>R</variation>
    <location>
        <position position="1123"/>
    </location>
</feature>